<sequence>MSIRIIPQDELGSSEKRTADMIPPLLFPRLKNLYNRRAERLRELAENNPLGDYLRFAALIAHAQEVVLYDHPLEMDLTTRIKEASAQGKPPLDIHVLPRDKHWQKLLMALIAELKPEMSGPALAVIENLEKASTQELEDMASALFASDFSSVSSDKAPFIWAALSLYWAQMANLIPGKARAEYGEQRQYCPVCGSMPVSSMVQIGTTQGLRYLHCNLCETEWHVVRVKCSNCEQSGKLHYWSLDDEQAAIKAESCDDCGTYLKILYQEKDPKIEAVADDLASLVLDARMEQEGYARSSINPFLFPGEGE</sequence>
<reference key="1">
    <citation type="journal article" date="2008" name="J. Bacteriol.">
        <title>Insights into the environmental resistance gene pool from the genome sequence of the multidrug-resistant environmental isolate Escherichia coli SMS-3-5.</title>
        <authorList>
            <person name="Fricke W.F."/>
            <person name="Wright M.S."/>
            <person name="Lindell A.H."/>
            <person name="Harkins D.M."/>
            <person name="Baker-Austin C."/>
            <person name="Ravel J."/>
            <person name="Stepanauskas R."/>
        </authorList>
    </citation>
    <scope>NUCLEOTIDE SEQUENCE [LARGE SCALE GENOMIC DNA]</scope>
    <source>
        <strain>SMS-3-5 / SECEC</strain>
    </source>
</reference>
<feature type="chain" id="PRO_1000130360" description="Protein FdhE">
    <location>
        <begin position="1"/>
        <end position="309"/>
    </location>
</feature>
<name>FDHE_ECOSM</name>
<comment type="function">
    <text evidence="1">Necessary for formate dehydrogenase activity.</text>
</comment>
<comment type="subcellular location">
    <subcellularLocation>
        <location evidence="1">Cytoplasm</location>
    </subcellularLocation>
</comment>
<comment type="similarity">
    <text evidence="1">Belongs to the FdhE family.</text>
</comment>
<proteinExistence type="inferred from homology"/>
<keyword id="KW-0963">Cytoplasm</keyword>
<gene>
    <name evidence="1" type="primary">fdhE</name>
    <name type="ordered locus">EcSMS35_4277</name>
</gene>
<organism>
    <name type="scientific">Escherichia coli (strain SMS-3-5 / SECEC)</name>
    <dbReference type="NCBI Taxonomy" id="439855"/>
    <lineage>
        <taxon>Bacteria</taxon>
        <taxon>Pseudomonadati</taxon>
        <taxon>Pseudomonadota</taxon>
        <taxon>Gammaproteobacteria</taxon>
        <taxon>Enterobacterales</taxon>
        <taxon>Enterobacteriaceae</taxon>
        <taxon>Escherichia</taxon>
    </lineage>
</organism>
<protein>
    <recommendedName>
        <fullName evidence="1">Protein FdhE</fullName>
    </recommendedName>
</protein>
<evidence type="ECO:0000255" key="1">
    <source>
        <dbReference type="HAMAP-Rule" id="MF_00611"/>
    </source>
</evidence>
<accession>B1LMS6</accession>
<dbReference type="EMBL" id="CP000970">
    <property type="protein sequence ID" value="ACB17562.1"/>
    <property type="molecule type" value="Genomic_DNA"/>
</dbReference>
<dbReference type="RefSeq" id="WP_000027718.1">
    <property type="nucleotide sequence ID" value="NC_010498.1"/>
</dbReference>
<dbReference type="SMR" id="B1LMS6"/>
<dbReference type="KEGG" id="ecm:EcSMS35_4277"/>
<dbReference type="HOGENOM" id="CLU_055275_0_0_6"/>
<dbReference type="Proteomes" id="UP000007011">
    <property type="component" value="Chromosome"/>
</dbReference>
<dbReference type="GO" id="GO:0005829">
    <property type="term" value="C:cytosol"/>
    <property type="evidence" value="ECO:0007669"/>
    <property type="project" value="TreeGrafter"/>
</dbReference>
<dbReference type="GO" id="GO:0008199">
    <property type="term" value="F:ferric iron binding"/>
    <property type="evidence" value="ECO:0007669"/>
    <property type="project" value="TreeGrafter"/>
</dbReference>
<dbReference type="GO" id="GO:0051604">
    <property type="term" value="P:protein maturation"/>
    <property type="evidence" value="ECO:0007669"/>
    <property type="project" value="TreeGrafter"/>
</dbReference>
<dbReference type="CDD" id="cd16341">
    <property type="entry name" value="FdhE"/>
    <property type="match status" value="1"/>
</dbReference>
<dbReference type="FunFam" id="3.90.1670.10:FF:000001">
    <property type="entry name" value="Protein FdhE"/>
    <property type="match status" value="1"/>
</dbReference>
<dbReference type="Gene3D" id="3.90.1670.10">
    <property type="entry name" value="FdhE-like domain"/>
    <property type="match status" value="1"/>
</dbReference>
<dbReference type="HAMAP" id="MF_00611">
    <property type="entry name" value="FdeH"/>
    <property type="match status" value="1"/>
</dbReference>
<dbReference type="InterPro" id="IPR024064">
    <property type="entry name" value="FdhE-like_sf"/>
</dbReference>
<dbReference type="InterPro" id="IPR056796">
    <property type="entry name" value="FdhE_C"/>
</dbReference>
<dbReference type="InterPro" id="IPR056797">
    <property type="entry name" value="FdhE_central"/>
</dbReference>
<dbReference type="InterPro" id="IPR056774">
    <property type="entry name" value="FdhE_N"/>
</dbReference>
<dbReference type="InterPro" id="IPR006452">
    <property type="entry name" value="Formate_DH_accessory"/>
</dbReference>
<dbReference type="NCBIfam" id="TIGR01562">
    <property type="entry name" value="FdhE"/>
    <property type="match status" value="1"/>
</dbReference>
<dbReference type="NCBIfam" id="NF002925">
    <property type="entry name" value="PRK03564.1"/>
    <property type="match status" value="1"/>
</dbReference>
<dbReference type="PANTHER" id="PTHR37689">
    <property type="entry name" value="PROTEIN FDHE"/>
    <property type="match status" value="1"/>
</dbReference>
<dbReference type="PANTHER" id="PTHR37689:SF1">
    <property type="entry name" value="PROTEIN FDHE"/>
    <property type="match status" value="1"/>
</dbReference>
<dbReference type="Pfam" id="PF24860">
    <property type="entry name" value="FdhE_C"/>
    <property type="match status" value="1"/>
</dbReference>
<dbReference type="Pfam" id="PF24859">
    <property type="entry name" value="FdhE_central"/>
    <property type="match status" value="1"/>
</dbReference>
<dbReference type="Pfam" id="PF04216">
    <property type="entry name" value="FdhE_N"/>
    <property type="match status" value="1"/>
</dbReference>
<dbReference type="PIRSF" id="PIRSF018296">
    <property type="entry name" value="Format_dh_formtn"/>
    <property type="match status" value="1"/>
</dbReference>
<dbReference type="SUPFAM" id="SSF144020">
    <property type="entry name" value="FdhE-like"/>
    <property type="match status" value="1"/>
</dbReference>